<evidence type="ECO:0000250" key="1">
    <source>
        <dbReference type="UniProtKB" id="O75083"/>
    </source>
</evidence>
<evidence type="ECO:0000250" key="2">
    <source>
        <dbReference type="UniProtKB" id="O88342"/>
    </source>
</evidence>
<evidence type="ECO:0000250" key="3">
    <source>
        <dbReference type="UniProtKB" id="Q5RKI0"/>
    </source>
</evidence>
<evidence type="ECO:0000305" key="4"/>
<comment type="function">
    <text evidence="1 2">Induces disassembly of actin filaments in conjunction with ADF/cofilin family proteins. Enhances cofilin-mediated actin severing (By similarity).</text>
</comment>
<comment type="subcellular location">
    <subcellularLocation>
        <location evidence="3">Cytoplasm</location>
        <location evidence="3">Cytoskeleton</location>
    </subcellularLocation>
</comment>
<comment type="similarity">
    <text evidence="4">Belongs to the WD repeat AIP1 family.</text>
</comment>
<organism>
    <name type="scientific">Gallus gallus</name>
    <name type="common">Chicken</name>
    <dbReference type="NCBI Taxonomy" id="9031"/>
    <lineage>
        <taxon>Eukaryota</taxon>
        <taxon>Metazoa</taxon>
        <taxon>Chordata</taxon>
        <taxon>Craniata</taxon>
        <taxon>Vertebrata</taxon>
        <taxon>Euteleostomi</taxon>
        <taxon>Archelosauria</taxon>
        <taxon>Archosauria</taxon>
        <taxon>Dinosauria</taxon>
        <taxon>Saurischia</taxon>
        <taxon>Theropoda</taxon>
        <taxon>Coelurosauria</taxon>
        <taxon>Aves</taxon>
        <taxon>Neognathae</taxon>
        <taxon>Galloanserae</taxon>
        <taxon>Galliformes</taxon>
        <taxon>Phasianidae</taxon>
        <taxon>Phasianinae</taxon>
        <taxon>Gallus</taxon>
    </lineage>
</organism>
<proteinExistence type="evidence at transcript level"/>
<keyword id="KW-0009">Actin-binding</keyword>
<keyword id="KW-0963">Cytoplasm</keyword>
<keyword id="KW-0206">Cytoskeleton</keyword>
<keyword id="KW-1185">Reference proteome</keyword>
<keyword id="KW-0677">Repeat</keyword>
<keyword id="KW-0853">WD repeat</keyword>
<dbReference type="EMBL" id="AF020054">
    <property type="protein sequence ID" value="AAD05042.1"/>
    <property type="molecule type" value="mRNA"/>
</dbReference>
<dbReference type="RefSeq" id="NP_001004402.1">
    <property type="nucleotide sequence ID" value="NM_001004402.1"/>
</dbReference>
<dbReference type="SMR" id="O93277"/>
<dbReference type="FunCoup" id="O93277">
    <property type="interactions" value="2512"/>
</dbReference>
<dbReference type="STRING" id="9031.ENSGALP00000024078"/>
<dbReference type="GlyGen" id="O93277">
    <property type="glycosylation" value="1 site"/>
</dbReference>
<dbReference type="PaxDb" id="9031-ENSGALP00000024078"/>
<dbReference type="GeneID" id="422842"/>
<dbReference type="KEGG" id="gga:422842"/>
<dbReference type="CTD" id="9948"/>
<dbReference type="VEuPathDB" id="HostDB:geneid_422842"/>
<dbReference type="eggNOG" id="KOG0318">
    <property type="taxonomic scope" value="Eukaryota"/>
</dbReference>
<dbReference type="InParanoid" id="O93277"/>
<dbReference type="OrthoDB" id="2306at2759"/>
<dbReference type="PhylomeDB" id="O93277"/>
<dbReference type="PRO" id="PR:O93277"/>
<dbReference type="Proteomes" id="UP000000539">
    <property type="component" value="Unassembled WGS sequence"/>
</dbReference>
<dbReference type="GO" id="GO:0030864">
    <property type="term" value="C:cortical actin cytoskeleton"/>
    <property type="evidence" value="ECO:0000318"/>
    <property type="project" value="GO_Central"/>
</dbReference>
<dbReference type="GO" id="GO:0051015">
    <property type="term" value="F:actin filament binding"/>
    <property type="evidence" value="ECO:0000250"/>
    <property type="project" value="UniProtKB"/>
</dbReference>
<dbReference type="GO" id="GO:0030042">
    <property type="term" value="P:actin filament depolymerization"/>
    <property type="evidence" value="ECO:0000318"/>
    <property type="project" value="GO_Central"/>
</dbReference>
<dbReference type="GO" id="GO:0040011">
    <property type="term" value="P:locomotion"/>
    <property type="evidence" value="ECO:0000318"/>
    <property type="project" value="GO_Central"/>
</dbReference>
<dbReference type="GO" id="GO:0045214">
    <property type="term" value="P:sarcomere organization"/>
    <property type="evidence" value="ECO:0000318"/>
    <property type="project" value="GO_Central"/>
</dbReference>
<dbReference type="CDD" id="cd00200">
    <property type="entry name" value="WD40"/>
    <property type="match status" value="1"/>
</dbReference>
<dbReference type="FunFam" id="2.130.10.10:FF:000097">
    <property type="entry name" value="WD repeat domain 1"/>
    <property type="match status" value="1"/>
</dbReference>
<dbReference type="FunFam" id="2.130.10.10:FF:000203">
    <property type="entry name" value="WD repeat domain 1"/>
    <property type="match status" value="1"/>
</dbReference>
<dbReference type="Gene3D" id="2.130.10.10">
    <property type="entry name" value="YVTN repeat-like/Quinoprotein amine dehydrogenase"/>
    <property type="match status" value="2"/>
</dbReference>
<dbReference type="InterPro" id="IPR020472">
    <property type="entry name" value="G-protein_beta_WD-40_rep"/>
</dbReference>
<dbReference type="InterPro" id="IPR011045">
    <property type="entry name" value="N2O_reductase_N"/>
</dbReference>
<dbReference type="InterPro" id="IPR015943">
    <property type="entry name" value="WD40/YVTN_repeat-like_dom_sf"/>
</dbReference>
<dbReference type="InterPro" id="IPR019775">
    <property type="entry name" value="WD40_repeat_CS"/>
</dbReference>
<dbReference type="InterPro" id="IPR001680">
    <property type="entry name" value="WD40_rpt"/>
</dbReference>
<dbReference type="PANTHER" id="PTHR19856:SF0">
    <property type="entry name" value="WD REPEAT-CONTAINING PROTEIN 1"/>
    <property type="match status" value="1"/>
</dbReference>
<dbReference type="PANTHER" id="PTHR19856">
    <property type="entry name" value="WD-REPEATCONTAINING PROTEIN WDR1"/>
    <property type="match status" value="1"/>
</dbReference>
<dbReference type="Pfam" id="PF00400">
    <property type="entry name" value="WD40"/>
    <property type="match status" value="8"/>
</dbReference>
<dbReference type="PRINTS" id="PR00320">
    <property type="entry name" value="GPROTEINBRPT"/>
</dbReference>
<dbReference type="SMART" id="SM00320">
    <property type="entry name" value="WD40"/>
    <property type="match status" value="11"/>
</dbReference>
<dbReference type="SUPFAM" id="SSF50974">
    <property type="entry name" value="Nitrous oxide reductase, N-terminal domain"/>
    <property type="match status" value="1"/>
</dbReference>
<dbReference type="SUPFAM" id="SSF50960">
    <property type="entry name" value="TolB, C-terminal domain"/>
    <property type="match status" value="1"/>
</dbReference>
<dbReference type="PROSITE" id="PS00678">
    <property type="entry name" value="WD_REPEATS_1"/>
    <property type="match status" value="1"/>
</dbReference>
<dbReference type="PROSITE" id="PS50082">
    <property type="entry name" value="WD_REPEATS_2"/>
    <property type="match status" value="5"/>
</dbReference>
<dbReference type="PROSITE" id="PS50294">
    <property type="entry name" value="WD_REPEATS_REGION"/>
    <property type="match status" value="1"/>
</dbReference>
<name>WDR1_CHICK</name>
<reference key="1">
    <citation type="journal article" date="1999" name="Genomics">
        <title>A gene upregulated in the acoustically damaged chick basilar papilla encodes a novel WD40 repeat protein.</title>
        <authorList>
            <person name="Adler H.J."/>
            <person name="Winnicki R.S."/>
            <person name="Gong T.-W.L."/>
            <person name="Lomax M.I."/>
        </authorList>
    </citation>
    <scope>NUCLEOTIDE SEQUENCE [MRNA]</scope>
</reference>
<gene>
    <name type="primary">WDR1</name>
</gene>
<protein>
    <recommendedName>
        <fullName>WD repeat-containing protein 1</fullName>
    </recommendedName>
    <alternativeName>
        <fullName>Actin-interacting protein 1</fullName>
        <shortName>AIP1</shortName>
    </alternativeName>
</protein>
<sequence>MRMPYEIKKVFASLPQVERGVSKIIGGDPKGNNFLYTNGKCVVIRNIDNPAIADIYTEHAHQVVVAKYAPSGFYIASGDVSGKLRIWDTTQKEHLLKYEYQPFAGKIKDLAWTEDSKRIAVVGEGREKFGAVFLWDSGSSVGEITGHNKVINSVDIKQTRPYRLATGSDDNCAAFFEGPPFKFKFTLSDHTRFVNCVRFSPDGNRFATASADGQIFIYDGKTGEKVCALGGGKAHDGGIYAISWSPDSSQLLSASGDKTAKIWDVGANSVVSTFNMGSNVLDQQLGCLWQKDHLLSLSLSGYINYLDKNNPDKPLRVIKGHSKSIQCLTVHKNGGKSYIYSGSNDGHINYWDSDTGENDGFSGKGHTNQVSRMAVDEMDQLVTCSMDDTVRYTNLSKRDYSGQDAVKMDVQPKCLAVGPGGYTVVLCIGQIVLMKDKKKCFAIDDLGYEPEAVAVHPGGGSVAVGGTDGNVRLYSIQGTSLKSDDKTLEAKGPVTDLAYSHDGAFLAVCDANKVVTVFSVPDGYVEHNVFYGHHAKVVCIAWSPDNEHFASGGMDMMVYVWTVSDPETRIKIPDAHRLHHVSGLAWLDEHTLVTTSHDASVKEWSISYN</sequence>
<feature type="chain" id="PRO_0000051343" description="WD repeat-containing protein 1">
    <location>
        <begin position="1"/>
        <end position="609"/>
    </location>
</feature>
<feature type="repeat" description="WD 1">
    <location>
        <begin position="6"/>
        <end position="47"/>
    </location>
</feature>
<feature type="repeat" description="WD 2">
    <location>
        <begin position="50"/>
        <end position="89"/>
    </location>
</feature>
<feature type="repeat" description="WD 3">
    <location>
        <begin position="95"/>
        <end position="137"/>
    </location>
</feature>
<feature type="repeat" description="WD 4">
    <location>
        <begin position="140"/>
        <end position="178"/>
    </location>
</feature>
<feature type="repeat" description="WD 5">
    <location>
        <begin position="182"/>
        <end position="220"/>
    </location>
</feature>
<feature type="repeat" description="WD 6">
    <location>
        <begin position="226"/>
        <end position="265"/>
    </location>
</feature>
<feature type="repeat" description="WD 7">
    <location>
        <begin position="272"/>
        <end position="308"/>
    </location>
</feature>
<feature type="repeat" description="WD 8">
    <location>
        <begin position="313"/>
        <end position="353"/>
    </location>
</feature>
<feature type="repeat" description="WD 9">
    <location>
        <begin position="360"/>
        <end position="410"/>
    </location>
</feature>
<feature type="repeat" description="WD 10">
    <location>
        <begin position="434"/>
        <end position="476"/>
    </location>
</feature>
<feature type="repeat" description="WD 11">
    <location>
        <begin position="482"/>
        <end position="520"/>
    </location>
</feature>
<feature type="repeat" description="WD 12">
    <location>
        <begin position="525"/>
        <end position="563"/>
    </location>
</feature>
<feature type="repeat" description="WD 13">
    <location>
        <begin position="568"/>
        <end position="606"/>
    </location>
</feature>
<accession>O93277</accession>